<gene>
    <name type="primary">EIF2B5</name>
    <name type="synonym">EIF2BE</name>
</gene>
<feature type="initiator methionine" description="Removed" evidence="27 31 32">
    <location>
        <position position="1"/>
    </location>
</feature>
<feature type="chain" id="PRO_0000156073" description="Translation initiation factor eIF2B subunit epsilon">
    <location>
        <begin position="2"/>
        <end position="721"/>
    </location>
</feature>
<feature type="domain" description="W2" evidence="5">
    <location>
        <begin position="543"/>
        <end position="720"/>
    </location>
</feature>
<feature type="region of interest" description="Disordered" evidence="6">
    <location>
        <begin position="1"/>
        <end position="40"/>
    </location>
</feature>
<feature type="region of interest" description="Disordered" evidence="6">
    <location>
        <begin position="444"/>
        <end position="483"/>
    </location>
</feature>
<feature type="region of interest" description="Disordered" evidence="6">
    <location>
        <begin position="523"/>
        <end position="547"/>
    </location>
</feature>
<feature type="compositionally biased region" description="Low complexity" evidence="6">
    <location>
        <begin position="1"/>
        <end position="13"/>
    </location>
</feature>
<feature type="compositionally biased region" description="Gly residues" evidence="6">
    <location>
        <begin position="22"/>
        <end position="33"/>
    </location>
</feature>
<feature type="compositionally biased region" description="Acidic residues" evidence="6">
    <location>
        <begin position="456"/>
        <end position="471"/>
    </location>
</feature>
<feature type="compositionally biased region" description="Acidic residues" evidence="6">
    <location>
        <begin position="523"/>
        <end position="537"/>
    </location>
</feature>
<feature type="modified residue" description="N-acetylalanine" evidence="27 31 32">
    <location>
        <position position="2"/>
    </location>
</feature>
<feature type="modified residue" description="Omega-N-methylarginine" evidence="4">
    <location>
        <position position="19"/>
    </location>
</feature>
<feature type="modified residue" description="Phosphoserine" evidence="3">
    <location>
        <position position="27"/>
    </location>
</feature>
<feature type="modified residue" description="Phosphoserine" evidence="3">
    <location>
        <position position="130"/>
    </location>
</feature>
<feature type="modified residue" description="Phosphothreonine" evidence="3">
    <location>
        <position position="322"/>
    </location>
</feature>
<feature type="modified residue" description="Phosphoserine" evidence="34">
    <location>
        <position position="450"/>
    </location>
</feature>
<feature type="modified residue" description="Phosphoserine" evidence="34">
    <location>
        <position position="466"/>
    </location>
</feature>
<feature type="modified residue" description="Phosphoserine" evidence="34">
    <location>
        <position position="469"/>
    </location>
</feature>
<feature type="modified residue" description="Phosphoserine" evidence="3">
    <location>
        <position position="532"/>
    </location>
</feature>
<feature type="modified residue" description="Phosphoserine" evidence="3">
    <location>
        <position position="540"/>
    </location>
</feature>
<feature type="modified residue" description="Phosphoserine; by DYRK2" evidence="24 25 26 29 30 33 34">
    <location>
        <position position="544"/>
    </location>
</feature>
<feature type="modified residue" description="Phosphoserine" evidence="28">
    <location>
        <position position="717"/>
    </location>
</feature>
<feature type="cross-link" description="Glycyl lysine isopeptide (Lys-Gly) (interchain with G-Cter in ubiquitin)" evidence="3">
    <location>
        <position position="61"/>
    </location>
</feature>
<feature type="cross-link" description="Glycyl lysine isopeptide (Lys-Gly) (interchain with G-Cter in ubiquitin)" evidence="3">
    <location>
        <position position="103"/>
    </location>
</feature>
<feature type="cross-link" description="Glycyl lysine isopeptide (Lys-Gly) (interchain with G-Cter in ubiquitin)" evidence="3">
    <location>
        <position position="141"/>
    </location>
</feature>
<feature type="cross-link" description="Glycyl lysine isopeptide (Lys-Gly) (interchain with G-Cter in ubiquitin)" evidence="3">
    <location>
        <position position="217"/>
    </location>
</feature>
<feature type="sequence variant" id="VAR_068457" description="In VWM5; dbSNP:rs1560105986." evidence="13">
    <original>D</original>
    <variation>V</variation>
    <location>
        <position position="62"/>
    </location>
</feature>
<feature type="sequence variant" id="VAR_068458" description="In VWM5; dbSNP:rs113994044." evidence="12">
    <original>L</original>
    <variation>S</variation>
    <location>
        <position position="68"/>
    </location>
</feature>
<feature type="sequence variant" id="VAR_012323" description="In VWM5; dbSNP:rs113994045." evidence="7">
    <original>V</original>
    <variation>G</variation>
    <location>
        <position position="73"/>
    </location>
</feature>
<feature type="sequence variant" id="VAR_068459" description="In VWM5; dbSNP:rs113994046." evidence="12">
    <original>A</original>
    <variation>T</variation>
    <location>
        <position position="74"/>
    </location>
</feature>
<feature type="sequence variant" id="VAR_012291" description="In VWM5; dbSNP:rs28939717." evidence="7">
    <original>T</original>
    <variation>A</variation>
    <location>
        <position position="91"/>
    </location>
</feature>
<feature type="sequence variant" id="VAR_012324" description="In VWM5; dbSNP:rs113994048." evidence="7">
    <original>L</original>
    <variation>F</variation>
    <location>
        <position position="106"/>
    </location>
</feature>
<feature type="sequence variant" id="VAR_068460" description="In VWM5; dbSNP:rs113994050." evidence="13">
    <original>R</original>
    <variation>C</variation>
    <location>
        <position position="113"/>
    </location>
</feature>
<feature type="sequence variant" id="VAR_012292" description="In VWM5; with ovarian failure; dbSNP:rs113994049." evidence="7 9 12">
    <original>R</original>
    <variation>H</variation>
    <location>
        <position position="113"/>
    </location>
</feature>
<feature type="sequence variant" id="VAR_016845" description="In VWM5; with ovarian failure; dbSNP:rs113994055." evidence="9">
    <original>R</original>
    <variation>C</variation>
    <location>
        <position position="195"/>
    </location>
</feature>
<feature type="sequence variant" id="VAR_016846" description="In VWM5; Cree leukoencephalopathy type; dbSNP:rs113994054." evidence="8">
    <original>R</original>
    <variation>H</variation>
    <location>
        <position position="195"/>
    </location>
</feature>
<feature type="sequence variant" id="VAR_048919" description="In dbSNP:rs2971409.">
    <original>N</original>
    <variation>T</variation>
    <location>
        <position position="200"/>
    </location>
</feature>
<feature type="sequence variant" id="VAR_068461" description="In VWM5; dbSNP:rs113994058." evidence="12">
    <original>R</original>
    <variation>G</variation>
    <location>
        <position position="269"/>
    </location>
</feature>
<feature type="sequence variant" id="VAR_068462" description="In VWM5; dbSNP:rs113994057." evidence="13">
    <original>R</original>
    <variation>Q</variation>
    <location>
        <position position="269"/>
    </location>
</feature>
<feature type="sequence variant" id="VAR_068463" description="In VWM5; dbSNP:rs397514646." evidence="14">
    <original>D</original>
    <variation>H</variation>
    <location>
        <position position="270"/>
    </location>
</feature>
<feature type="sequence variant" id="VAR_012325" description="In VWM5; dbSNP:rs113994060." evidence="7">
    <original>R</original>
    <variation>H</variation>
    <location>
        <position position="299"/>
    </location>
</feature>
<feature type="sequence variant" id="VAR_068464" description="In VWM5; dbSNP:rs113994062." evidence="12">
    <original>C</original>
    <variation>F</variation>
    <location>
        <position position="310"/>
    </location>
</feature>
<feature type="sequence variant" id="VAR_068465" description="In VWM5; dbSNP:rs113994063." evidence="13">
    <original>R</original>
    <variation>C</variation>
    <location>
        <position position="315"/>
    </location>
</feature>
<feature type="sequence variant" id="VAR_012326" description="In VWM5; dbSNP:rs113994063." evidence="7">
    <original>R</original>
    <variation>G</variation>
    <location>
        <position position="315"/>
    </location>
</feature>
<feature type="sequence variant" id="VAR_012327" description="In VWM5; dbSNP:rs113994064." evidence="7">
    <original>R</original>
    <variation>H</variation>
    <location>
        <position position="315"/>
    </location>
</feature>
<feature type="sequence variant" id="VAR_068466" description="In VWM5; dbSNP:rs113994067." evidence="12">
    <original>C</original>
    <variation>R</variation>
    <location>
        <position position="335"/>
    </location>
</feature>
<feature type="sequence variant" id="VAR_068467" description="In VWM5." evidence="13">
    <original>C</original>
    <variation>S</variation>
    <location>
        <position position="335"/>
    </location>
</feature>
<feature type="sequence variant" id="VAR_012328" description="In VWM5; dbSNP:rs113994069." evidence="7 13">
    <original>R</original>
    <variation>P</variation>
    <location>
        <position position="339"/>
    </location>
</feature>
<feature type="sequence variant" id="VAR_012329" description="In VWM5; dbSNP:rs113994069." evidence="7">
    <original>R</original>
    <variation>Q</variation>
    <location>
        <position position="339"/>
    </location>
</feature>
<feature type="sequence variant" id="VAR_012330" description="In VWM5; dbSNP:rs113994068." evidence="7">
    <original>R</original>
    <variation>W</variation>
    <location>
        <position position="339"/>
    </location>
</feature>
<feature type="sequence variant" id="VAR_068468" description="In VWM5." evidence="13">
    <original>N</original>
    <variation>D</variation>
    <location>
        <position position="376"/>
    </location>
</feature>
<feature type="sequence variant" id="VAR_012293" description="In VWM5; dbSNP:rs113994074." evidence="7 13">
    <original>G</original>
    <variation>V</variation>
    <location>
        <position position="386"/>
    </location>
</feature>
<feature type="sequence variant" id="VAR_012331" description="In VWM5; dbSNP:rs113994079." evidence="7">
    <original>V</original>
    <variation>A</variation>
    <location>
        <position position="430"/>
    </location>
</feature>
<feature type="sequence variant" id="VAR_068469" description="In VWM5; dbSNP:rs113994080." evidence="13">
    <original>S</original>
    <variation>L</variation>
    <location>
        <position position="447"/>
    </location>
</feature>
<feature type="sequence variant" id="VAR_012332" description="In dbSNP:rs843358." evidence="7 10 11 19 20">
    <original>I</original>
    <variation>V</variation>
    <location>
        <position position="587"/>
    </location>
</feature>
<feature type="sequence variant" id="VAR_012294" description="In VWM5; dbSNP:rs28937596." evidence="7">
    <original>W</original>
    <variation>R</variation>
    <location>
        <position position="628"/>
    </location>
</feature>
<feature type="sequence variant" id="VAR_012333" description="In VWM5; dbSNP:rs113994085." evidence="7">
    <original>E</original>
    <variation>K</variation>
    <location>
        <position position="650"/>
    </location>
</feature>
<feature type="strand" evidence="41">
    <location>
        <begin position="44"/>
        <end position="48"/>
    </location>
</feature>
<feature type="turn" evidence="41">
    <location>
        <begin position="55"/>
        <end position="58"/>
    </location>
</feature>
<feature type="helix" evidence="41">
    <location>
        <begin position="59"/>
        <end position="61"/>
    </location>
</feature>
<feature type="helix" evidence="41">
    <location>
        <begin position="65"/>
        <end position="67"/>
    </location>
</feature>
<feature type="strand" evidence="41">
    <location>
        <begin position="69"/>
        <end position="74"/>
    </location>
</feature>
<feature type="helix" evidence="41">
    <location>
        <begin position="75"/>
        <end position="85"/>
    </location>
</feature>
<feature type="strand" evidence="41">
    <location>
        <begin position="90"/>
        <end position="95"/>
    </location>
</feature>
<feature type="helix" evidence="41">
    <location>
        <begin position="99"/>
        <end position="107"/>
    </location>
</feature>
<feature type="helix" evidence="41">
    <location>
        <begin position="110"/>
        <end position="112"/>
    </location>
</feature>
<feature type="strand" evidence="41">
    <location>
        <begin position="117"/>
        <end position="124"/>
    </location>
</feature>
<feature type="helix" evidence="41">
    <location>
        <begin position="131"/>
        <end position="141"/>
    </location>
</feature>
<feature type="strand" evidence="41">
    <location>
        <begin position="149"/>
        <end position="152"/>
    </location>
</feature>
<feature type="strand" evidence="41">
    <location>
        <begin position="155"/>
        <end position="157"/>
    </location>
</feature>
<feature type="helix" evidence="41">
    <location>
        <begin position="162"/>
        <end position="174"/>
    </location>
</feature>
<feature type="turn" evidence="41">
    <location>
        <begin position="175"/>
        <end position="177"/>
    </location>
</feature>
<feature type="strand" evidence="41">
    <location>
        <begin position="181"/>
        <end position="187"/>
    </location>
</feature>
<feature type="helix" evidence="40">
    <location>
        <begin position="193"/>
        <end position="195"/>
    </location>
</feature>
<feature type="turn" evidence="37">
    <location>
        <begin position="197"/>
        <end position="199"/>
    </location>
</feature>
<feature type="strand" evidence="41">
    <location>
        <begin position="201"/>
        <end position="206"/>
    </location>
</feature>
<feature type="turn" evidence="41">
    <location>
        <begin position="207"/>
        <end position="210"/>
    </location>
</feature>
<feature type="strand" evidence="41">
    <location>
        <begin position="211"/>
        <end position="217"/>
    </location>
</feature>
<feature type="strand" evidence="41">
    <location>
        <begin position="222"/>
        <end position="226"/>
    </location>
</feature>
<feature type="helix" evidence="41">
    <location>
        <begin position="230"/>
        <end position="232"/>
    </location>
</feature>
<feature type="strand" evidence="41">
    <location>
        <begin position="238"/>
        <end position="241"/>
    </location>
</feature>
<feature type="strand" evidence="41">
    <location>
        <begin position="244"/>
        <end position="251"/>
    </location>
</feature>
<feature type="helix" evidence="41">
    <location>
        <begin position="254"/>
        <end position="262"/>
    </location>
</feature>
<feature type="helix" evidence="41">
    <location>
        <begin position="269"/>
        <end position="278"/>
    </location>
</feature>
<feature type="strand" evidence="41">
    <location>
        <begin position="281"/>
        <end position="283"/>
    </location>
</feature>
<feature type="strand" evidence="41">
    <location>
        <begin position="287"/>
        <end position="295"/>
    </location>
</feature>
<feature type="strand" evidence="41">
    <location>
        <begin position="297"/>
        <end position="299"/>
    </location>
</feature>
<feature type="helix" evidence="41">
    <location>
        <begin position="303"/>
        <end position="314"/>
    </location>
</feature>
<feature type="turn" evidence="41">
    <location>
        <begin position="315"/>
        <end position="320"/>
    </location>
</feature>
<feature type="helix" evidence="41">
    <location>
        <begin position="323"/>
        <end position="325"/>
    </location>
</feature>
<feature type="helix" evidence="41">
    <location>
        <begin position="331"/>
        <end position="333"/>
    </location>
</feature>
<feature type="strand" evidence="41">
    <location>
        <begin position="336"/>
        <end position="338"/>
    </location>
</feature>
<feature type="turn" evidence="41">
    <location>
        <begin position="339"/>
        <end position="341"/>
    </location>
</feature>
<feature type="strand" evidence="41">
    <location>
        <begin position="342"/>
        <end position="344"/>
    </location>
</feature>
<feature type="strand" evidence="41">
    <location>
        <begin position="358"/>
        <end position="362"/>
    </location>
</feature>
<feature type="strand" evidence="41">
    <location>
        <begin position="373"/>
        <end position="376"/>
    </location>
</feature>
<feature type="strand" evidence="39">
    <location>
        <begin position="384"/>
        <end position="387"/>
    </location>
</feature>
<feature type="strand" evidence="41">
    <location>
        <begin position="390"/>
        <end position="393"/>
    </location>
</feature>
<feature type="strand" evidence="39">
    <location>
        <begin position="400"/>
        <end position="405"/>
    </location>
</feature>
<feature type="strand" evidence="41">
    <location>
        <begin position="407"/>
        <end position="413"/>
    </location>
</feature>
<feature type="strand" evidence="41">
    <location>
        <begin position="421"/>
        <end position="425"/>
    </location>
</feature>
<feature type="strand" evidence="41">
    <location>
        <begin position="427"/>
        <end position="434"/>
    </location>
</feature>
<feature type="strand" evidence="41">
    <location>
        <begin position="439"/>
        <end position="442"/>
    </location>
</feature>
<feature type="strand" evidence="41">
    <location>
        <begin position="448"/>
        <end position="452"/>
    </location>
</feature>
<feature type="turn" evidence="41">
    <location>
        <begin position="453"/>
        <end position="455"/>
    </location>
</feature>
<feature type="strand" evidence="37">
    <location>
        <begin position="456"/>
        <end position="458"/>
    </location>
</feature>
<feature type="strand" evidence="36">
    <location>
        <begin position="462"/>
        <end position="464"/>
    </location>
</feature>
<feature type="helix" evidence="35">
    <location>
        <begin position="548"/>
        <end position="567"/>
    </location>
</feature>
<feature type="helix" evidence="35">
    <location>
        <begin position="571"/>
        <end position="584"/>
    </location>
</feature>
<feature type="helix" evidence="35">
    <location>
        <begin position="589"/>
        <end position="602"/>
    </location>
</feature>
<feature type="helix" evidence="35">
    <location>
        <begin position="603"/>
        <end position="607"/>
    </location>
</feature>
<feature type="strand" evidence="38">
    <location>
        <begin position="608"/>
        <end position="610"/>
    </location>
</feature>
<feature type="helix" evidence="35">
    <location>
        <begin position="614"/>
        <end position="635"/>
    </location>
</feature>
<feature type="helix" evidence="35">
    <location>
        <begin position="639"/>
        <end position="655"/>
    </location>
</feature>
<feature type="helix" evidence="35">
    <location>
        <begin position="657"/>
        <end position="662"/>
    </location>
</feature>
<feature type="helix" evidence="35">
    <location>
        <begin position="663"/>
        <end position="672"/>
    </location>
</feature>
<feature type="helix" evidence="35">
    <location>
        <begin position="678"/>
        <end position="685"/>
    </location>
</feature>
<feature type="helix" evidence="35">
    <location>
        <begin position="693"/>
        <end position="697"/>
    </location>
</feature>
<feature type="helix" evidence="35">
    <location>
        <begin position="701"/>
        <end position="714"/>
    </location>
</feature>
<name>EI2BE_HUMAN</name>
<dbReference type="EMBL" id="AK091646">
    <property type="protein sequence ID" value="BAC03712.1"/>
    <property type="molecule type" value="mRNA"/>
</dbReference>
<dbReference type="EMBL" id="AC131235">
    <property type="status" value="NOT_ANNOTATED_CDS"/>
    <property type="molecule type" value="Genomic_DNA"/>
</dbReference>
<dbReference type="EMBL" id="CH471052">
    <property type="protein sequence ID" value="EAW78299.1"/>
    <property type="molecule type" value="Genomic_DNA"/>
</dbReference>
<dbReference type="EMBL" id="BC013590">
    <property type="protein sequence ID" value="AAH13590.1"/>
    <property type="molecule type" value="mRNA"/>
</dbReference>
<dbReference type="EMBL" id="U23028">
    <property type="protein sequence ID" value="AAC50646.1"/>
    <property type="molecule type" value="mRNA"/>
</dbReference>
<dbReference type="CCDS" id="CCDS3252.1"/>
<dbReference type="RefSeq" id="NP_003898.2">
    <property type="nucleotide sequence ID" value="NM_003907.3"/>
</dbReference>
<dbReference type="PDB" id="3JUI">
    <property type="method" value="X-ray"/>
    <property type="resolution" value="2.00 A"/>
    <property type="chains" value="A=548-721"/>
</dbReference>
<dbReference type="PDB" id="6CAJ">
    <property type="method" value="EM"/>
    <property type="resolution" value="2.80 A"/>
    <property type="chains" value="A/B=1-721"/>
</dbReference>
<dbReference type="PDB" id="6EZO">
    <property type="method" value="EM"/>
    <property type="resolution" value="4.10 A"/>
    <property type="chains" value="I/J=1-721"/>
</dbReference>
<dbReference type="PDB" id="6K71">
    <property type="method" value="EM"/>
    <property type="resolution" value="4.30 A"/>
    <property type="chains" value="I/J=1-721"/>
</dbReference>
<dbReference type="PDB" id="6K72">
    <property type="method" value="EM"/>
    <property type="resolution" value="4.60 A"/>
    <property type="chains" value="I/J=1-721"/>
</dbReference>
<dbReference type="PDB" id="6O81">
    <property type="method" value="EM"/>
    <property type="resolution" value="3.21 A"/>
    <property type="chains" value="A/B=1-721"/>
</dbReference>
<dbReference type="PDB" id="6O85">
    <property type="method" value="EM"/>
    <property type="resolution" value="3.03 A"/>
    <property type="chains" value="A/B=1-721"/>
</dbReference>
<dbReference type="PDB" id="6O9Z">
    <property type="method" value="EM"/>
    <property type="resolution" value="3.03 A"/>
    <property type="chains" value="A/B=1-721"/>
</dbReference>
<dbReference type="PDB" id="7D43">
    <property type="method" value="EM"/>
    <property type="resolution" value="4.30 A"/>
    <property type="chains" value="I/J=1-721"/>
</dbReference>
<dbReference type="PDB" id="7D44">
    <property type="method" value="EM"/>
    <property type="resolution" value="4.00 A"/>
    <property type="chains" value="I/J=1-721"/>
</dbReference>
<dbReference type="PDB" id="7D45">
    <property type="method" value="EM"/>
    <property type="resolution" value="3.80 A"/>
    <property type="chains" value="I/J=1-721"/>
</dbReference>
<dbReference type="PDB" id="7D46">
    <property type="method" value="EM"/>
    <property type="resolution" value="4.00 A"/>
    <property type="chains" value="I/J=1-721"/>
</dbReference>
<dbReference type="PDB" id="7F64">
    <property type="method" value="EM"/>
    <property type="resolution" value="2.42 A"/>
    <property type="chains" value="I/J=1-721"/>
</dbReference>
<dbReference type="PDB" id="7F66">
    <property type="method" value="EM"/>
    <property type="resolution" value="2.76 A"/>
    <property type="chains" value="I/J=1-721"/>
</dbReference>
<dbReference type="PDB" id="7F67">
    <property type="method" value="EM"/>
    <property type="resolution" value="3.59 A"/>
    <property type="chains" value="I/J=1-721"/>
</dbReference>
<dbReference type="PDB" id="7KMF">
    <property type="method" value="EM"/>
    <property type="resolution" value="2.91 A"/>
    <property type="chains" value="B/I=1-721"/>
</dbReference>
<dbReference type="PDB" id="7L70">
    <property type="method" value="EM"/>
    <property type="resolution" value="2.80 A"/>
    <property type="chains" value="A/B=1-721"/>
</dbReference>
<dbReference type="PDB" id="7L7G">
    <property type="method" value="EM"/>
    <property type="resolution" value="3.00 A"/>
    <property type="chains" value="A/B=1-721"/>
</dbReference>
<dbReference type="PDB" id="7RLO">
    <property type="method" value="EM"/>
    <property type="resolution" value="2.60 A"/>
    <property type="chains" value="A/B=1-721"/>
</dbReference>
<dbReference type="PDB" id="7TRJ">
    <property type="method" value="EM"/>
    <property type="resolution" value="2.80 A"/>
    <property type="chains" value="A/B=1-721"/>
</dbReference>
<dbReference type="PDB" id="7VLK">
    <property type="method" value="EM"/>
    <property type="resolution" value="2.27 A"/>
    <property type="chains" value="I/J=1-721"/>
</dbReference>
<dbReference type="PDB" id="8TQO">
    <property type="method" value="EM"/>
    <property type="resolution" value="3.10 A"/>
    <property type="chains" value="A=1-721"/>
</dbReference>
<dbReference type="PDB" id="8TQZ">
    <property type="method" value="EM"/>
    <property type="resolution" value="2.90 A"/>
    <property type="chains" value="A/B=1-721"/>
</dbReference>
<dbReference type="PDBsum" id="3JUI"/>
<dbReference type="PDBsum" id="6CAJ"/>
<dbReference type="PDBsum" id="6EZO"/>
<dbReference type="PDBsum" id="6K71"/>
<dbReference type="PDBsum" id="6K72"/>
<dbReference type="PDBsum" id="6O81"/>
<dbReference type="PDBsum" id="6O85"/>
<dbReference type="PDBsum" id="6O9Z"/>
<dbReference type="PDBsum" id="7D43"/>
<dbReference type="PDBsum" id="7D44"/>
<dbReference type="PDBsum" id="7D45"/>
<dbReference type="PDBsum" id="7D46"/>
<dbReference type="PDBsum" id="7F64"/>
<dbReference type="PDBsum" id="7F66"/>
<dbReference type="PDBsum" id="7F67"/>
<dbReference type="PDBsum" id="7KMF"/>
<dbReference type="PDBsum" id="7L70"/>
<dbReference type="PDBsum" id="7L7G"/>
<dbReference type="PDBsum" id="7RLO"/>
<dbReference type="PDBsum" id="7TRJ"/>
<dbReference type="PDBsum" id="7VLK"/>
<dbReference type="PDBsum" id="8TQO"/>
<dbReference type="PDBsum" id="8TQZ"/>
<dbReference type="EMDB" id="EMD-0649"/>
<dbReference type="EMDB" id="EMD-0651"/>
<dbReference type="EMDB" id="EMD-0664"/>
<dbReference type="EMDB" id="EMD-22924"/>
<dbReference type="EMDB" id="EMD-23209"/>
<dbReference type="EMDB" id="EMD-24535"/>
<dbReference type="EMDB" id="EMD-26098"/>
<dbReference type="EMDB" id="EMD-30568"/>
<dbReference type="EMDB" id="EMD-30569"/>
<dbReference type="EMDB" id="EMD-30570"/>
<dbReference type="EMDB" id="EMD-30571"/>
<dbReference type="EMDB" id="EMD-31472"/>
<dbReference type="EMDB" id="EMD-31474"/>
<dbReference type="EMDB" id="EMD-31475"/>
<dbReference type="EMDB" id="EMD-32023"/>
<dbReference type="EMDB" id="EMD-41510"/>
<dbReference type="EMDB" id="EMD-41566"/>
<dbReference type="EMDB" id="EMD-4162"/>
<dbReference type="EMDB" id="EMD-7442"/>
<dbReference type="EMDB" id="EMD-9840"/>
<dbReference type="EMDB" id="EMD-9841"/>
<dbReference type="EMDB" id="EMD-9842"/>
<dbReference type="SMR" id="Q13144"/>
<dbReference type="BioGRID" id="114410">
    <property type="interactions" value="201"/>
</dbReference>
<dbReference type="ComplexPortal" id="CPX-8343">
    <property type="entry name" value="Eukaryotic translation initiation factor 2B complex"/>
</dbReference>
<dbReference type="CORUM" id="Q13144"/>
<dbReference type="FunCoup" id="Q13144">
    <property type="interactions" value="5006"/>
</dbReference>
<dbReference type="IntAct" id="Q13144">
    <property type="interactions" value="139"/>
</dbReference>
<dbReference type="MINT" id="Q13144"/>
<dbReference type="STRING" id="9606.ENSP00000497160"/>
<dbReference type="GlyGen" id="Q13144">
    <property type="glycosylation" value="1 site, 1 O-linked glycan (1 site)"/>
</dbReference>
<dbReference type="iPTMnet" id="Q13144"/>
<dbReference type="PhosphoSitePlus" id="Q13144"/>
<dbReference type="SwissPalm" id="Q13144"/>
<dbReference type="BioMuta" id="EIF2B5"/>
<dbReference type="DMDM" id="160359049"/>
<dbReference type="jPOST" id="Q13144"/>
<dbReference type="MassIVE" id="Q13144"/>
<dbReference type="PaxDb" id="9606-ENSP00000273783"/>
<dbReference type="PeptideAtlas" id="Q13144"/>
<dbReference type="ProteomicsDB" id="59187"/>
<dbReference type="Pumba" id="Q13144"/>
<dbReference type="Antibodypedia" id="4211">
    <property type="antibodies" value="168 antibodies from 27 providers"/>
</dbReference>
<dbReference type="DNASU" id="8893"/>
<dbReference type="Ensembl" id="ENST00000648915.2">
    <property type="protein sequence ID" value="ENSP00000497160.1"/>
    <property type="gene ID" value="ENSG00000145191.15"/>
</dbReference>
<dbReference type="GeneID" id="8893"/>
<dbReference type="KEGG" id="hsa:8893"/>
<dbReference type="MANE-Select" id="ENST00000648915.2">
    <property type="protein sequence ID" value="ENSP00000497160.1"/>
    <property type="RefSeq nucleotide sequence ID" value="NM_003907.3"/>
    <property type="RefSeq protein sequence ID" value="NP_003898.2"/>
</dbReference>
<dbReference type="UCSC" id="uc003fmp.4">
    <property type="organism name" value="human"/>
</dbReference>
<dbReference type="AGR" id="HGNC:3261"/>
<dbReference type="CTD" id="8893"/>
<dbReference type="DisGeNET" id="8893"/>
<dbReference type="GeneCards" id="EIF2B5"/>
<dbReference type="GeneReviews" id="EIF2B5"/>
<dbReference type="HGNC" id="HGNC:3261">
    <property type="gene designation" value="EIF2B5"/>
</dbReference>
<dbReference type="HPA" id="ENSG00000145191">
    <property type="expression patterns" value="Low tissue specificity"/>
</dbReference>
<dbReference type="MalaCards" id="EIF2B5"/>
<dbReference type="MIM" id="603945">
    <property type="type" value="gene"/>
</dbReference>
<dbReference type="MIM" id="620315">
    <property type="type" value="phenotype"/>
</dbReference>
<dbReference type="neXtProt" id="NX_Q13144"/>
<dbReference type="OpenTargets" id="ENSG00000145191"/>
<dbReference type="Orphanet" id="157713">
    <property type="disease" value="Congenital or early infantile CACH syndrome"/>
</dbReference>
<dbReference type="Orphanet" id="99854">
    <property type="disease" value="Cree leukoencephalopathy"/>
</dbReference>
<dbReference type="Orphanet" id="157719">
    <property type="disease" value="Juvenile or adult CACH syndrome"/>
</dbReference>
<dbReference type="Orphanet" id="157716">
    <property type="disease" value="Late infantile CACH syndrome"/>
</dbReference>
<dbReference type="Orphanet" id="99853">
    <property type="disease" value="Ovarioleukodystrophy"/>
</dbReference>
<dbReference type="PharmGKB" id="PA27692"/>
<dbReference type="VEuPathDB" id="HostDB:ENSG00000145191"/>
<dbReference type="eggNOG" id="KOG1461">
    <property type="taxonomic scope" value="Eukaryota"/>
</dbReference>
<dbReference type="GeneTree" id="ENSGT00510000047568"/>
<dbReference type="HOGENOM" id="CLU_012507_2_0_1"/>
<dbReference type="InParanoid" id="Q13144"/>
<dbReference type="OrthoDB" id="424572at2759"/>
<dbReference type="PAN-GO" id="Q13144">
    <property type="GO annotations" value="3 GO annotations based on evolutionary models"/>
</dbReference>
<dbReference type="PhylomeDB" id="Q13144"/>
<dbReference type="TreeFam" id="TF101509"/>
<dbReference type="PathwayCommons" id="Q13144"/>
<dbReference type="Reactome" id="R-HSA-72731">
    <property type="pathway name" value="Recycling of eIF2:GDP"/>
</dbReference>
<dbReference type="SignaLink" id="Q13144"/>
<dbReference type="SIGNOR" id="Q13144"/>
<dbReference type="BioGRID-ORCS" id="8893">
    <property type="hits" value="787 hits in 1160 CRISPR screens"/>
</dbReference>
<dbReference type="ChiTaRS" id="EIF2B5">
    <property type="organism name" value="human"/>
</dbReference>
<dbReference type="EvolutionaryTrace" id="Q13144"/>
<dbReference type="GeneWiki" id="EIF2B5"/>
<dbReference type="GenomeRNAi" id="8893"/>
<dbReference type="Pharos" id="Q13144">
    <property type="development level" value="Tbio"/>
</dbReference>
<dbReference type="PRO" id="PR:Q13144"/>
<dbReference type="Proteomes" id="UP000005640">
    <property type="component" value="Chromosome 3"/>
</dbReference>
<dbReference type="RNAct" id="Q13144">
    <property type="molecule type" value="protein"/>
</dbReference>
<dbReference type="Bgee" id="ENSG00000145191">
    <property type="expression patterns" value="Expressed in sural nerve and 204 other cell types or tissues"/>
</dbReference>
<dbReference type="ExpressionAtlas" id="Q13144">
    <property type="expression patterns" value="baseline and differential"/>
</dbReference>
<dbReference type="GO" id="GO:0005737">
    <property type="term" value="C:cytoplasm"/>
    <property type="evidence" value="ECO:0000314"/>
    <property type="project" value="UniProtKB"/>
</dbReference>
<dbReference type="GO" id="GO:0005829">
    <property type="term" value="C:cytosol"/>
    <property type="evidence" value="ECO:0000314"/>
    <property type="project" value="HPA"/>
</dbReference>
<dbReference type="GO" id="GO:0005851">
    <property type="term" value="C:eukaryotic translation initiation factor 2B complex"/>
    <property type="evidence" value="ECO:0000314"/>
    <property type="project" value="UniProtKB"/>
</dbReference>
<dbReference type="GO" id="GO:0005634">
    <property type="term" value="C:nucleus"/>
    <property type="evidence" value="ECO:0000250"/>
    <property type="project" value="UniProtKB"/>
</dbReference>
<dbReference type="GO" id="GO:0005085">
    <property type="term" value="F:guanyl-nucleotide exchange factor activity"/>
    <property type="evidence" value="ECO:0000314"/>
    <property type="project" value="UniProtKB"/>
</dbReference>
<dbReference type="GO" id="GO:0003743">
    <property type="term" value="F:translation initiation factor activity"/>
    <property type="evidence" value="ECO:0000303"/>
    <property type="project" value="UniProtKB"/>
</dbReference>
<dbReference type="GO" id="GO:0031369">
    <property type="term" value="F:translation initiation factor binding"/>
    <property type="evidence" value="ECO:0000250"/>
    <property type="project" value="UniProtKB"/>
</dbReference>
<dbReference type="GO" id="GO:0014002">
    <property type="term" value="P:astrocyte development"/>
    <property type="evidence" value="ECO:0000315"/>
    <property type="project" value="UniProtKB"/>
</dbReference>
<dbReference type="GO" id="GO:0048708">
    <property type="term" value="P:astrocyte differentiation"/>
    <property type="evidence" value="ECO:0000315"/>
    <property type="project" value="UniProtKB"/>
</dbReference>
<dbReference type="GO" id="GO:0002183">
    <property type="term" value="P:cytoplasmic translational initiation"/>
    <property type="evidence" value="ECO:0000314"/>
    <property type="project" value="UniProtKB"/>
</dbReference>
<dbReference type="GO" id="GO:0021766">
    <property type="term" value="P:hippocampus development"/>
    <property type="evidence" value="ECO:0007669"/>
    <property type="project" value="Ensembl"/>
</dbReference>
<dbReference type="GO" id="GO:0042552">
    <property type="term" value="P:myelination"/>
    <property type="evidence" value="ECO:0000315"/>
    <property type="project" value="UniProtKB"/>
</dbReference>
<dbReference type="GO" id="GO:0014003">
    <property type="term" value="P:oligodendrocyte development"/>
    <property type="evidence" value="ECO:0000315"/>
    <property type="project" value="UniProtKB"/>
</dbReference>
<dbReference type="GO" id="GO:0001541">
    <property type="term" value="P:ovarian follicle development"/>
    <property type="evidence" value="ECO:0000315"/>
    <property type="project" value="UniProtKB"/>
</dbReference>
<dbReference type="GO" id="GO:0043065">
    <property type="term" value="P:positive regulation of apoptotic process"/>
    <property type="evidence" value="ECO:0007669"/>
    <property type="project" value="Ensembl"/>
</dbReference>
<dbReference type="GO" id="GO:0045948">
    <property type="term" value="P:positive regulation of translational initiation"/>
    <property type="evidence" value="ECO:0000250"/>
    <property type="project" value="UniProtKB"/>
</dbReference>
<dbReference type="GO" id="GO:0034976">
    <property type="term" value="P:response to endoplasmic reticulum stress"/>
    <property type="evidence" value="ECO:0000315"/>
    <property type="project" value="UniProtKB"/>
</dbReference>
<dbReference type="GO" id="GO:0009749">
    <property type="term" value="P:response to glucose"/>
    <property type="evidence" value="ECO:0000250"/>
    <property type="project" value="UniProtKB"/>
</dbReference>
<dbReference type="GO" id="GO:0009408">
    <property type="term" value="P:response to heat"/>
    <property type="evidence" value="ECO:0000315"/>
    <property type="project" value="UniProtKB"/>
</dbReference>
<dbReference type="GO" id="GO:0043434">
    <property type="term" value="P:response to peptide hormone"/>
    <property type="evidence" value="ECO:0000250"/>
    <property type="project" value="UniProtKB"/>
</dbReference>
<dbReference type="GO" id="GO:0050852">
    <property type="term" value="P:T cell receptor signaling pathway"/>
    <property type="evidence" value="ECO:0000314"/>
    <property type="project" value="UniProtKB"/>
</dbReference>
<dbReference type="GO" id="GO:0006413">
    <property type="term" value="P:translational initiation"/>
    <property type="evidence" value="ECO:0000314"/>
    <property type="project" value="UniProtKB"/>
</dbReference>
<dbReference type="CDD" id="cd04197">
    <property type="entry name" value="eIF-2B_epsilon_N"/>
    <property type="match status" value="1"/>
</dbReference>
<dbReference type="CDD" id="cd05787">
    <property type="entry name" value="LbH_eIF2B_epsilon"/>
    <property type="match status" value="1"/>
</dbReference>
<dbReference type="CDD" id="cd11558">
    <property type="entry name" value="W2_eIF2B_epsilon"/>
    <property type="match status" value="1"/>
</dbReference>
<dbReference type="FunFam" id="1.25.40.180:FF:000022">
    <property type="entry name" value="Translation initiation factor eIF-2B epsilon subunit"/>
    <property type="match status" value="1"/>
</dbReference>
<dbReference type="FunFam" id="2.160.10.10:FF:000026">
    <property type="entry name" value="Translation initiation factor eIF-2B subunit epsilon"/>
    <property type="match status" value="1"/>
</dbReference>
<dbReference type="FunFam" id="2.160.10.10:FF:000027">
    <property type="entry name" value="Translation initiation factor eIF-2B subunit epsilon"/>
    <property type="match status" value="1"/>
</dbReference>
<dbReference type="FunFam" id="3.90.550.10:FF:000100">
    <property type="entry name" value="translation initiation factor eIF-2B subunit epsilon"/>
    <property type="match status" value="1"/>
</dbReference>
<dbReference type="Gene3D" id="1.25.40.180">
    <property type="match status" value="1"/>
</dbReference>
<dbReference type="Gene3D" id="2.160.10.10">
    <property type="entry name" value="Hexapeptide repeat proteins"/>
    <property type="match status" value="2"/>
</dbReference>
<dbReference type="Gene3D" id="3.90.550.10">
    <property type="entry name" value="Spore Coat Polysaccharide Biosynthesis Protein SpsA, Chain A"/>
    <property type="match status" value="1"/>
</dbReference>
<dbReference type="InterPro" id="IPR016024">
    <property type="entry name" value="ARM-type_fold"/>
</dbReference>
<dbReference type="InterPro" id="IPR035543">
    <property type="entry name" value="eIF-2B_epsilon_N"/>
</dbReference>
<dbReference type="InterPro" id="IPR051956">
    <property type="entry name" value="eIF2B_epsilon"/>
</dbReference>
<dbReference type="InterPro" id="IPR029044">
    <property type="entry name" value="Nucleotide-diphossugar_trans"/>
</dbReference>
<dbReference type="InterPro" id="IPR011004">
    <property type="entry name" value="Trimer_LpxA-like_sf"/>
</dbReference>
<dbReference type="InterPro" id="IPR003307">
    <property type="entry name" value="W2_domain"/>
</dbReference>
<dbReference type="InterPro" id="IPR044123">
    <property type="entry name" value="W2_eIF2B_epsilon"/>
</dbReference>
<dbReference type="PANTHER" id="PTHR45887">
    <property type="entry name" value="TRANSLATION INITIATION FACTOR EIF-2B SUBUNIT EPSILON"/>
    <property type="match status" value="1"/>
</dbReference>
<dbReference type="PANTHER" id="PTHR45887:SF1">
    <property type="entry name" value="TRANSLATION INITIATION FACTOR EIF-2B SUBUNIT EPSILON"/>
    <property type="match status" value="1"/>
</dbReference>
<dbReference type="Pfam" id="PF25084">
    <property type="entry name" value="LbH_EIF2B"/>
    <property type="match status" value="1"/>
</dbReference>
<dbReference type="Pfam" id="PF02020">
    <property type="entry name" value="W2"/>
    <property type="match status" value="1"/>
</dbReference>
<dbReference type="SMART" id="SM00515">
    <property type="entry name" value="eIF5C"/>
    <property type="match status" value="1"/>
</dbReference>
<dbReference type="SUPFAM" id="SSF48371">
    <property type="entry name" value="ARM repeat"/>
    <property type="match status" value="1"/>
</dbReference>
<dbReference type="SUPFAM" id="SSF53448">
    <property type="entry name" value="Nucleotide-diphospho-sugar transferases"/>
    <property type="match status" value="1"/>
</dbReference>
<dbReference type="SUPFAM" id="SSF51161">
    <property type="entry name" value="Trimeric LpxA-like enzymes"/>
    <property type="match status" value="1"/>
</dbReference>
<dbReference type="PROSITE" id="PS51363">
    <property type="entry name" value="W2"/>
    <property type="match status" value="1"/>
</dbReference>
<sequence length="721" mass="80380">MAAPVVAPPGVVVSRANKRSGAGPGGSGGGGARGAEEEPPPPLQAVLVADSFDRRFFPISKDQPRVLLPLANVALIDYTLEFLTATGVQETFVFCCWKAAQIKEHLLKSKWCRPTSLNVVRIITSELYRSLGDVLRDVDAKALVRSDFLLVYGDVISNINITRALEEHRLRRKLEKNVSVMTMIFKESSPSHPTRCHEDNVVVAVDSTTNRVLHFQKTQGLRRFAFPLSLFQGSSDGVEVRYDLLDCHISICSPQVAQLFTDNFDYQTRDDFVRGLLVNEEILGNQIHMHVTAKEYGARVSNLHMYSAVCADVIRRWVYPLTPEANFTDSTTQSCTHSRHNIYRGPEVSLGHGSILEENVLLGSGTVIGSNCFITNSVIGPGCHIGDNVVLDQTYLWQGVRVAAGAQIHQSLLCDNAEVKERVTLKPRSVLTSQVVVGPNITLPEGSVISLHPPDAEEDEDDGEFSDDSGADQEKDKVKMKGYNPAEVGAAGKGYLWKAAGMNMEEEEELQQNLWGLKINMEEESESESEQSMDSEEPDSRGGSPQMDDIKVFQNEVLGTLQRGKEENISCDNLVLEINSLKYAYNISLKEVMQVLSHVVLEFPLQQMDSPLDSSRYCALLLPLLKAWSPVFRNYIKRAADHLEALAAIEDFFLEHEALGISMAKVLMAFYQLEILAEETILSWFSQRDTTDKGQQLRKNQQLQRFIQWLKEAEEESSEDD</sequence>
<comment type="function">
    <text evidence="15 16 17">Acts as a component of the translation initiation factor 2B (eIF2B) complex, which catalyzes the exchange of GDP for GTP on eukaryotic initiation factor 2 (eIF2) gamma subunit (PubMed:25858979, PubMed:27023709, PubMed:31048492). Its guanine nucleotide exchange factor activity is repressed when bound to eIF2 complex phosphorylated on the alpha subunit, thereby limiting the amount of methionyl-initiator methionine tRNA available to the ribosome and consequently global translation is repressed (PubMed:25858979, PubMed:31048492).</text>
</comment>
<comment type="activity regulation">
    <text evidence="15">Activated by the chemical integrated stress response (ISR) inhibitor ISRIB which stimulates guanine nucleotide exchange factor activity for both phosphorylated and unphosphorylated eIF2.</text>
</comment>
<comment type="subunit">
    <text evidence="15 16 17">Component of the translation initiation factor 2B (eIF2B) complex which is a heterodecamer of two sets of five different subunits: alpha, beta, gamma, delta and epsilon. Subunits alpha, beta and delta comprise a regulatory subcomplex and subunits epsilon and gamma comprise a catalytic subcomplex (PubMed:25858979, PubMed:27023709, PubMed:31048492). Within the complex, the hexameric regulatory complex resides at the center, with the two heterodimeric catalytic subcomplexes bound on opposite sides (PubMed:31048492).</text>
</comment>
<comment type="interaction">
    <interactant intactId="EBI-4401110">
        <id>Q13144</id>
    </interactant>
    <interactant intactId="EBI-356015">
        <id>Q14204</id>
        <label>DYNC1H1</label>
    </interactant>
    <organismsDiffer>false</organismsDiffer>
    <experiments>3</experiments>
</comment>
<comment type="interaction">
    <interactant intactId="EBI-4401110">
        <id>Q13144</id>
    </interactant>
    <interactant intactId="EBI-373586">
        <id>P49841</id>
        <label>GSK3B</label>
    </interactant>
    <organismsDiffer>false</organismsDiffer>
    <experiments>2</experiments>
</comment>
<comment type="interaction">
    <interactant intactId="EBI-4401110">
        <id>Q13144</id>
    </interactant>
    <interactant intactId="EBI-2432309">
        <id>Q92876</id>
        <label>KLK6</label>
    </interactant>
    <organismsDiffer>false</organismsDiffer>
    <experiments>3</experiments>
</comment>
<comment type="interaction">
    <interactant intactId="EBI-4401110">
        <id>Q13144</id>
    </interactant>
    <interactant intactId="EBI-714135">
        <id>O75558</id>
        <label>STX11</label>
    </interactant>
    <organismsDiffer>false</organismsDiffer>
    <experiments>4</experiments>
</comment>
<comment type="subcellular location">
    <subcellularLocation>
        <location evidence="2">Cytoplasm</location>
        <location evidence="2">Cytosol</location>
    </subcellularLocation>
</comment>
<comment type="PTM">
    <text evidence="1 18">Phosphorylated at Ser-544 by DYRK2; this is required for subsequent phosphorylation by GSK3B (By similarity). Phosphorylated on serine and threonine residues by GSK3B; phosphorylation inhibits its function.</text>
</comment>
<comment type="PTM">
    <text evidence="1">Polyubiquitinated, probably by NEDD4.</text>
</comment>
<comment type="disease" evidence="7 8 9 12 13 14">
    <disease id="DI-06651">
        <name>Leukoencephalopathy with vanishing white matter 5</name>
        <acronym>VWM5</acronym>
        <description>An autosomal recessive brain disease characterized by neurological features including progressive cerebellar ataxia, spasticity, and cognitive deficits. Brain imaging shows abnormal white matter that vanishes over time and is replaced by cerebrospinal fluid. Disease severity ranges from fatal infantile forms to adult forms without neurological deterioration. The disease is progressive with, in most individuals, additional episodes of rapid deterioration following febrile infections or minor head trauma. Death may occurs after a variable period after disease onset, usually following an episode of fever and coma. A subset of affected females with milder forms of the disease who survive to adolescence exhibit ovarian dysfunction. This variant of the disorder is called ovarioleukodystrophy.</description>
        <dbReference type="MIM" id="620315"/>
    </disease>
    <text>The disease is caused by variants affecting the gene represented in this entry.</text>
</comment>
<comment type="similarity">
    <text evidence="21">Belongs to the eIF-2B gamma/epsilon subunits family.</text>
</comment>
<comment type="online information" name="Mendelian genes eukaryotic translation initiation factor 2B, subunit 5 epsilon, 82kDa (EIF2B5)">
    <link uri="https://databases.lovd.nl/shared/genes/EIF2B5"/>
    <text>Leiden Open Variation Database (LOVD)</text>
</comment>
<evidence type="ECO:0000250" key="1"/>
<evidence type="ECO:0000250" key="2">
    <source>
        <dbReference type="UniProtKB" id="P56287"/>
    </source>
</evidence>
<evidence type="ECO:0000250" key="3">
    <source>
        <dbReference type="UniProtKB" id="Q64350"/>
    </source>
</evidence>
<evidence type="ECO:0000250" key="4">
    <source>
        <dbReference type="UniProtKB" id="Q8CHW4"/>
    </source>
</evidence>
<evidence type="ECO:0000255" key="5">
    <source>
        <dbReference type="PROSITE-ProRule" id="PRU00695"/>
    </source>
</evidence>
<evidence type="ECO:0000256" key="6">
    <source>
        <dbReference type="SAM" id="MobiDB-lite"/>
    </source>
</evidence>
<evidence type="ECO:0000269" key="7">
    <source>
    </source>
</evidence>
<evidence type="ECO:0000269" key="8">
    <source>
    </source>
</evidence>
<evidence type="ECO:0000269" key="9">
    <source>
    </source>
</evidence>
<evidence type="ECO:0000269" key="10">
    <source>
    </source>
</evidence>
<evidence type="ECO:0000269" key="11">
    <source>
    </source>
</evidence>
<evidence type="ECO:0000269" key="12">
    <source>
    </source>
</evidence>
<evidence type="ECO:0000269" key="13">
    <source>
    </source>
</evidence>
<evidence type="ECO:0000269" key="14">
    <source>
    </source>
</evidence>
<evidence type="ECO:0000269" key="15">
    <source>
    </source>
</evidence>
<evidence type="ECO:0000269" key="16">
    <source>
    </source>
</evidence>
<evidence type="ECO:0000269" key="17">
    <source>
    </source>
</evidence>
<evidence type="ECO:0000269" key="18">
    <source>
    </source>
</evidence>
<evidence type="ECO:0000269" key="19">
    <source>
    </source>
</evidence>
<evidence type="ECO:0000269" key="20">
    <source ref="3"/>
</evidence>
<evidence type="ECO:0000305" key="21"/>
<evidence type="ECO:0007744" key="22">
    <source>
        <dbReference type="PDB" id="6K71"/>
    </source>
</evidence>
<evidence type="ECO:0007744" key="23">
    <source>
        <dbReference type="PDB" id="6K72"/>
    </source>
</evidence>
<evidence type="ECO:0007744" key="24">
    <source>
    </source>
</evidence>
<evidence type="ECO:0007744" key="25">
    <source>
    </source>
</evidence>
<evidence type="ECO:0007744" key="26">
    <source>
    </source>
</evidence>
<evidence type="ECO:0007744" key="27">
    <source>
    </source>
</evidence>
<evidence type="ECO:0007744" key="28">
    <source>
    </source>
</evidence>
<evidence type="ECO:0007744" key="29">
    <source>
    </source>
</evidence>
<evidence type="ECO:0007744" key="30">
    <source>
    </source>
</evidence>
<evidence type="ECO:0007744" key="31">
    <source>
    </source>
</evidence>
<evidence type="ECO:0007744" key="32">
    <source>
    </source>
</evidence>
<evidence type="ECO:0007744" key="33">
    <source>
    </source>
</evidence>
<evidence type="ECO:0007744" key="34">
    <source>
    </source>
</evidence>
<evidence type="ECO:0007829" key="35">
    <source>
        <dbReference type="PDB" id="3JUI"/>
    </source>
</evidence>
<evidence type="ECO:0007829" key="36">
    <source>
        <dbReference type="PDB" id="6O85"/>
    </source>
</evidence>
<evidence type="ECO:0007829" key="37">
    <source>
        <dbReference type="PDB" id="7F64"/>
    </source>
</evidence>
<evidence type="ECO:0007829" key="38">
    <source>
        <dbReference type="PDB" id="7F66"/>
    </source>
</evidence>
<evidence type="ECO:0007829" key="39">
    <source>
        <dbReference type="PDB" id="7KMF"/>
    </source>
</evidence>
<evidence type="ECO:0007829" key="40">
    <source>
        <dbReference type="PDB" id="7RLO"/>
    </source>
</evidence>
<evidence type="ECO:0007829" key="41">
    <source>
        <dbReference type="PDB" id="7VLK"/>
    </source>
</evidence>
<keyword id="KW-0002">3D-structure</keyword>
<keyword id="KW-0007">Acetylation</keyword>
<keyword id="KW-0963">Cytoplasm</keyword>
<keyword id="KW-0225">Disease variant</keyword>
<keyword id="KW-0396">Initiation factor</keyword>
<keyword id="KW-1017">Isopeptide bond</keyword>
<keyword id="KW-1026">Leukodystrophy</keyword>
<keyword id="KW-0488">Methylation</keyword>
<keyword id="KW-0597">Phosphoprotein</keyword>
<keyword id="KW-0648">Protein biosynthesis</keyword>
<keyword id="KW-1267">Proteomics identification</keyword>
<keyword id="KW-1185">Reference proteome</keyword>
<keyword id="KW-0832">Ubl conjugation</keyword>
<proteinExistence type="evidence at protein level"/>
<reference key="1">
    <citation type="journal article" date="2004" name="Nat. Genet.">
        <title>Complete sequencing and characterization of 21,243 full-length human cDNAs.</title>
        <authorList>
            <person name="Ota T."/>
            <person name="Suzuki Y."/>
            <person name="Nishikawa T."/>
            <person name="Otsuki T."/>
            <person name="Sugiyama T."/>
            <person name="Irie R."/>
            <person name="Wakamatsu A."/>
            <person name="Hayashi K."/>
            <person name="Sato H."/>
            <person name="Nagai K."/>
            <person name="Kimura K."/>
            <person name="Makita H."/>
            <person name="Sekine M."/>
            <person name="Obayashi M."/>
            <person name="Nishi T."/>
            <person name="Shibahara T."/>
            <person name="Tanaka T."/>
            <person name="Ishii S."/>
            <person name="Yamamoto J."/>
            <person name="Saito K."/>
            <person name="Kawai Y."/>
            <person name="Isono Y."/>
            <person name="Nakamura Y."/>
            <person name="Nagahari K."/>
            <person name="Murakami K."/>
            <person name="Yasuda T."/>
            <person name="Iwayanagi T."/>
            <person name="Wagatsuma M."/>
            <person name="Shiratori A."/>
            <person name="Sudo H."/>
            <person name="Hosoiri T."/>
            <person name="Kaku Y."/>
            <person name="Kodaira H."/>
            <person name="Kondo H."/>
            <person name="Sugawara M."/>
            <person name="Takahashi M."/>
            <person name="Kanda K."/>
            <person name="Yokoi T."/>
            <person name="Furuya T."/>
            <person name="Kikkawa E."/>
            <person name="Omura Y."/>
            <person name="Abe K."/>
            <person name="Kamihara K."/>
            <person name="Katsuta N."/>
            <person name="Sato K."/>
            <person name="Tanikawa M."/>
            <person name="Yamazaki M."/>
            <person name="Ninomiya K."/>
            <person name="Ishibashi T."/>
            <person name="Yamashita H."/>
            <person name="Murakawa K."/>
            <person name="Fujimori K."/>
            <person name="Tanai H."/>
            <person name="Kimata M."/>
            <person name="Watanabe M."/>
            <person name="Hiraoka S."/>
            <person name="Chiba Y."/>
            <person name="Ishida S."/>
            <person name="Ono Y."/>
            <person name="Takiguchi S."/>
            <person name="Watanabe S."/>
            <person name="Yosida M."/>
            <person name="Hotuta T."/>
            <person name="Kusano J."/>
            <person name="Kanehori K."/>
            <person name="Takahashi-Fujii A."/>
            <person name="Hara H."/>
            <person name="Tanase T.-O."/>
            <person name="Nomura Y."/>
            <person name="Togiya S."/>
            <person name="Komai F."/>
            <person name="Hara R."/>
            <person name="Takeuchi K."/>
            <person name="Arita M."/>
            <person name="Imose N."/>
            <person name="Musashino K."/>
            <person name="Yuuki H."/>
            <person name="Oshima A."/>
            <person name="Sasaki N."/>
            <person name="Aotsuka S."/>
            <person name="Yoshikawa Y."/>
            <person name="Matsunawa H."/>
            <person name="Ichihara T."/>
            <person name="Shiohata N."/>
            <person name="Sano S."/>
            <person name="Moriya S."/>
            <person name="Momiyama H."/>
            <person name="Satoh N."/>
            <person name="Takami S."/>
            <person name="Terashima Y."/>
            <person name="Suzuki O."/>
            <person name="Nakagawa S."/>
            <person name="Senoh A."/>
            <person name="Mizoguchi H."/>
            <person name="Goto Y."/>
            <person name="Shimizu F."/>
            <person name="Wakebe H."/>
            <person name="Hishigaki H."/>
            <person name="Watanabe T."/>
            <person name="Sugiyama A."/>
            <person name="Takemoto M."/>
            <person name="Kawakami B."/>
            <person name="Yamazaki M."/>
            <person name="Watanabe K."/>
            <person name="Kumagai A."/>
            <person name="Itakura S."/>
            <person name="Fukuzumi Y."/>
            <person name="Fujimori Y."/>
            <person name="Komiyama M."/>
            <person name="Tashiro H."/>
            <person name="Tanigami A."/>
            <person name="Fujiwara T."/>
            <person name="Ono T."/>
            <person name="Yamada K."/>
            <person name="Fujii Y."/>
            <person name="Ozaki K."/>
            <person name="Hirao M."/>
            <person name="Ohmori Y."/>
            <person name="Kawabata A."/>
            <person name="Hikiji T."/>
            <person name="Kobatake N."/>
            <person name="Inagaki H."/>
            <person name="Ikema Y."/>
            <person name="Okamoto S."/>
            <person name="Okitani R."/>
            <person name="Kawakami T."/>
            <person name="Noguchi S."/>
            <person name="Itoh T."/>
            <person name="Shigeta K."/>
            <person name="Senba T."/>
            <person name="Matsumura K."/>
            <person name="Nakajima Y."/>
            <person name="Mizuno T."/>
            <person name="Morinaga M."/>
            <person name="Sasaki M."/>
            <person name="Togashi T."/>
            <person name="Oyama M."/>
            <person name="Hata H."/>
            <person name="Watanabe M."/>
            <person name="Komatsu T."/>
            <person name="Mizushima-Sugano J."/>
            <person name="Satoh T."/>
            <person name="Shirai Y."/>
            <person name="Takahashi Y."/>
            <person name="Nakagawa K."/>
            <person name="Okumura K."/>
            <person name="Nagase T."/>
            <person name="Nomura N."/>
            <person name="Kikuchi H."/>
            <person name="Masuho Y."/>
            <person name="Yamashita R."/>
            <person name="Nakai K."/>
            <person name="Yada T."/>
            <person name="Nakamura Y."/>
            <person name="Ohara O."/>
            <person name="Isogai T."/>
            <person name="Sugano S."/>
        </authorList>
    </citation>
    <scope>NUCLEOTIDE SEQUENCE [LARGE SCALE MRNA]</scope>
    <scope>VARIANT VAL-587</scope>
    <source>
        <tissue>Brain</tissue>
    </source>
</reference>
<reference key="2">
    <citation type="journal article" date="2006" name="Nature">
        <title>The DNA sequence, annotation and analysis of human chromosome 3.</title>
        <authorList>
            <person name="Muzny D.M."/>
            <person name="Scherer S.E."/>
            <person name="Kaul R."/>
            <person name="Wang J."/>
            <person name="Yu J."/>
            <person name="Sudbrak R."/>
            <person name="Buhay C.J."/>
            <person name="Chen R."/>
            <person name="Cree A."/>
            <person name="Ding Y."/>
            <person name="Dugan-Rocha S."/>
            <person name="Gill R."/>
            <person name="Gunaratne P."/>
            <person name="Harris R.A."/>
            <person name="Hawes A.C."/>
            <person name="Hernandez J."/>
            <person name="Hodgson A.V."/>
            <person name="Hume J."/>
            <person name="Jackson A."/>
            <person name="Khan Z.M."/>
            <person name="Kovar-Smith C."/>
            <person name="Lewis L.R."/>
            <person name="Lozado R.J."/>
            <person name="Metzker M.L."/>
            <person name="Milosavljevic A."/>
            <person name="Miner G.R."/>
            <person name="Morgan M.B."/>
            <person name="Nazareth L.V."/>
            <person name="Scott G."/>
            <person name="Sodergren E."/>
            <person name="Song X.-Z."/>
            <person name="Steffen D."/>
            <person name="Wei S."/>
            <person name="Wheeler D.A."/>
            <person name="Wright M.W."/>
            <person name="Worley K.C."/>
            <person name="Yuan Y."/>
            <person name="Zhang Z."/>
            <person name="Adams C.Q."/>
            <person name="Ansari-Lari M.A."/>
            <person name="Ayele M."/>
            <person name="Brown M.J."/>
            <person name="Chen G."/>
            <person name="Chen Z."/>
            <person name="Clendenning J."/>
            <person name="Clerc-Blankenburg K.P."/>
            <person name="Chen R."/>
            <person name="Chen Z."/>
            <person name="Davis C."/>
            <person name="Delgado O."/>
            <person name="Dinh H.H."/>
            <person name="Dong W."/>
            <person name="Draper H."/>
            <person name="Ernst S."/>
            <person name="Fu G."/>
            <person name="Gonzalez-Garay M.L."/>
            <person name="Garcia D.K."/>
            <person name="Gillett W."/>
            <person name="Gu J."/>
            <person name="Hao B."/>
            <person name="Haugen E."/>
            <person name="Havlak P."/>
            <person name="He X."/>
            <person name="Hennig S."/>
            <person name="Hu S."/>
            <person name="Huang W."/>
            <person name="Jackson L.R."/>
            <person name="Jacob L.S."/>
            <person name="Kelly S.H."/>
            <person name="Kube M."/>
            <person name="Levy R."/>
            <person name="Li Z."/>
            <person name="Liu B."/>
            <person name="Liu J."/>
            <person name="Liu W."/>
            <person name="Lu J."/>
            <person name="Maheshwari M."/>
            <person name="Nguyen B.-V."/>
            <person name="Okwuonu G.O."/>
            <person name="Palmeiri A."/>
            <person name="Pasternak S."/>
            <person name="Perez L.M."/>
            <person name="Phelps K.A."/>
            <person name="Plopper F.J."/>
            <person name="Qiang B."/>
            <person name="Raymond C."/>
            <person name="Rodriguez R."/>
            <person name="Saenphimmachak C."/>
            <person name="Santibanez J."/>
            <person name="Shen H."/>
            <person name="Shen Y."/>
            <person name="Subramanian S."/>
            <person name="Tabor P.E."/>
            <person name="Verduzco D."/>
            <person name="Waldron L."/>
            <person name="Wang J."/>
            <person name="Wang J."/>
            <person name="Wang Q."/>
            <person name="Williams G.A."/>
            <person name="Wong G.K.-S."/>
            <person name="Yao Z."/>
            <person name="Zhang J."/>
            <person name="Zhang X."/>
            <person name="Zhao G."/>
            <person name="Zhou J."/>
            <person name="Zhou Y."/>
            <person name="Nelson D."/>
            <person name="Lehrach H."/>
            <person name="Reinhardt R."/>
            <person name="Naylor S.L."/>
            <person name="Yang H."/>
            <person name="Olson M."/>
            <person name="Weinstock G."/>
            <person name="Gibbs R.A."/>
        </authorList>
    </citation>
    <scope>NUCLEOTIDE SEQUENCE [LARGE SCALE GENOMIC DNA]</scope>
</reference>
<reference key="3">
    <citation type="submission" date="2005-09" db="EMBL/GenBank/DDBJ databases">
        <authorList>
            <person name="Mural R.J."/>
            <person name="Istrail S."/>
            <person name="Sutton G.G."/>
            <person name="Florea L."/>
            <person name="Halpern A.L."/>
            <person name="Mobarry C.M."/>
            <person name="Lippert R."/>
            <person name="Walenz B."/>
            <person name="Shatkay H."/>
            <person name="Dew I."/>
            <person name="Miller J.R."/>
            <person name="Flanigan M.J."/>
            <person name="Edwards N.J."/>
            <person name="Bolanos R."/>
            <person name="Fasulo D."/>
            <person name="Halldorsson B.V."/>
            <person name="Hannenhalli S."/>
            <person name="Turner R."/>
            <person name="Yooseph S."/>
            <person name="Lu F."/>
            <person name="Nusskern D.R."/>
            <person name="Shue B.C."/>
            <person name="Zheng X.H."/>
            <person name="Zhong F."/>
            <person name="Delcher A.L."/>
            <person name="Huson D.H."/>
            <person name="Kravitz S.A."/>
            <person name="Mouchard L."/>
            <person name="Reinert K."/>
            <person name="Remington K.A."/>
            <person name="Clark A.G."/>
            <person name="Waterman M.S."/>
            <person name="Eichler E.E."/>
            <person name="Adams M.D."/>
            <person name="Hunkapiller M.W."/>
            <person name="Myers E.W."/>
            <person name="Venter J.C."/>
        </authorList>
    </citation>
    <scope>NUCLEOTIDE SEQUENCE [LARGE SCALE GENOMIC DNA]</scope>
    <scope>VARIANT VAL-587</scope>
</reference>
<reference key="4">
    <citation type="journal article" date="2004" name="Genome Res.">
        <title>The status, quality, and expansion of the NIH full-length cDNA project: the Mammalian Gene Collection (MGC).</title>
        <authorList>
            <consortium name="The MGC Project Team"/>
        </authorList>
    </citation>
    <scope>NUCLEOTIDE SEQUENCE [LARGE SCALE MRNA]</scope>
    <scope>VARIANT VAL-587</scope>
    <source>
        <tissue>Lung</tissue>
    </source>
</reference>
<reference key="5">
    <citation type="journal article" date="1996" name="Biochim. Biophys. Acta">
        <title>Cloning and characterization of cDNAs encoding the epsilon-subunit of eukaryotic initiation factor-2B from rabbit and human.</title>
        <authorList>
            <person name="Asuru A.I."/>
            <person name="Mellor H."/>
            <person name="Thomas N.S.B."/>
            <person name="Yu L."/>
            <person name="Chen J.-J."/>
            <person name="Crosby J.S."/>
            <person name="Hartson S.D."/>
            <person name="Kimball S.R."/>
            <person name="Jefferson L.S."/>
            <person name="Matts R.L."/>
        </authorList>
    </citation>
    <scope>NUCLEOTIDE SEQUENCE [MRNA] OF 81-721</scope>
    <scope>VARIANT VAL-587</scope>
</reference>
<reference key="6">
    <citation type="journal article" date="1993" name="Biochem. J.">
        <title>Glycogen synthase kinase-3 is rapidly inactivated in response to insulin and phosphorylates eukaryotic initiation factor eIF-2B.</title>
        <authorList>
            <person name="Welsh G.I."/>
            <person name="Proud C.G."/>
        </authorList>
    </citation>
    <scope>PHOSPHORYLATION BY GSK3B</scope>
</reference>
<reference key="7">
    <citation type="journal article" date="2008" name="J. Proteome Res.">
        <title>Phosphoproteome of resting human platelets.</title>
        <authorList>
            <person name="Zahedi R.P."/>
            <person name="Lewandrowski U."/>
            <person name="Wiesner J."/>
            <person name="Wortelkamp S."/>
            <person name="Moebius J."/>
            <person name="Schuetz C."/>
            <person name="Walter U."/>
            <person name="Gambaryan S."/>
            <person name="Sickmann A."/>
        </authorList>
    </citation>
    <scope>PHOSPHORYLATION [LARGE SCALE ANALYSIS] AT SER-544</scope>
    <scope>IDENTIFICATION BY MASS SPECTROMETRY [LARGE SCALE ANALYSIS]</scope>
    <source>
        <tissue>Platelet</tissue>
    </source>
</reference>
<reference key="8">
    <citation type="journal article" date="2008" name="Mol. Cell">
        <title>Kinase-selective enrichment enables quantitative phosphoproteomics of the kinome across the cell cycle.</title>
        <authorList>
            <person name="Daub H."/>
            <person name="Olsen J.V."/>
            <person name="Bairlein M."/>
            <person name="Gnad F."/>
            <person name="Oppermann F.S."/>
            <person name="Korner R."/>
            <person name="Greff Z."/>
            <person name="Keri G."/>
            <person name="Stemmann O."/>
            <person name="Mann M."/>
        </authorList>
    </citation>
    <scope>PHOSPHORYLATION [LARGE SCALE ANALYSIS] AT SER-544</scope>
    <scope>IDENTIFICATION BY MASS SPECTROMETRY [LARGE SCALE ANALYSIS]</scope>
    <source>
        <tissue>Cervix carcinoma</tissue>
    </source>
</reference>
<reference key="9">
    <citation type="journal article" date="2008" name="Proc. Natl. Acad. Sci. U.S.A.">
        <title>A quantitative atlas of mitotic phosphorylation.</title>
        <authorList>
            <person name="Dephoure N."/>
            <person name="Zhou C."/>
            <person name="Villen J."/>
            <person name="Beausoleil S.A."/>
            <person name="Bakalarski C.E."/>
            <person name="Elledge S.J."/>
            <person name="Gygi S.P."/>
        </authorList>
    </citation>
    <scope>PHOSPHORYLATION [LARGE SCALE ANALYSIS] AT SER-544</scope>
    <scope>IDENTIFICATION BY MASS SPECTROMETRY [LARGE SCALE ANALYSIS]</scope>
    <source>
        <tissue>Cervix carcinoma</tissue>
    </source>
</reference>
<reference key="10">
    <citation type="journal article" date="2009" name="Anal. Chem.">
        <title>Lys-N and trypsin cover complementary parts of the phosphoproteome in a refined SCX-based approach.</title>
        <authorList>
            <person name="Gauci S."/>
            <person name="Helbig A.O."/>
            <person name="Slijper M."/>
            <person name="Krijgsveld J."/>
            <person name="Heck A.J."/>
            <person name="Mohammed S."/>
        </authorList>
    </citation>
    <scope>ACETYLATION [LARGE SCALE ANALYSIS] AT ALA-2</scope>
    <scope>CLEAVAGE OF INITIATOR METHIONINE [LARGE SCALE ANALYSIS]</scope>
    <scope>IDENTIFICATION BY MASS SPECTROMETRY [LARGE SCALE ANALYSIS]</scope>
</reference>
<reference key="11">
    <citation type="journal article" date="2009" name="J. Cell Biol.">
        <title>Translational control by RGS2.</title>
        <authorList>
            <person name="Nguyen C.H."/>
            <person name="Ming H."/>
            <person name="Zhao P."/>
            <person name="Hugendubler L."/>
            <person name="Gros R."/>
            <person name="Kimball S.R."/>
            <person name="Chidiac P."/>
        </authorList>
    </citation>
    <scope>INTERACTION WITH RGS2</scope>
</reference>
<reference key="12">
    <citation type="journal article" date="2009" name="Sci. Signal.">
        <title>Quantitative phosphoproteomic analysis of T cell receptor signaling reveals system-wide modulation of protein-protein interactions.</title>
        <authorList>
            <person name="Mayya V."/>
            <person name="Lundgren D.H."/>
            <person name="Hwang S.-I."/>
            <person name="Rezaul K."/>
            <person name="Wu L."/>
            <person name="Eng J.K."/>
            <person name="Rodionov V."/>
            <person name="Han D.K."/>
        </authorList>
    </citation>
    <scope>PHOSPHORYLATION [LARGE SCALE ANALYSIS] AT SER-717</scope>
    <scope>IDENTIFICATION BY MASS SPECTROMETRY [LARGE SCALE ANALYSIS]</scope>
    <source>
        <tissue>Leukemic T-cell</tissue>
    </source>
</reference>
<reference key="13">
    <citation type="journal article" date="2010" name="Sci. Signal.">
        <title>Quantitative phosphoproteomics reveals widespread full phosphorylation site occupancy during mitosis.</title>
        <authorList>
            <person name="Olsen J.V."/>
            <person name="Vermeulen M."/>
            <person name="Santamaria A."/>
            <person name="Kumar C."/>
            <person name="Miller M.L."/>
            <person name="Jensen L.J."/>
            <person name="Gnad F."/>
            <person name="Cox J."/>
            <person name="Jensen T.S."/>
            <person name="Nigg E.A."/>
            <person name="Brunak S."/>
            <person name="Mann M."/>
        </authorList>
    </citation>
    <scope>PHOSPHORYLATION [LARGE SCALE ANALYSIS] AT SER-544</scope>
    <scope>IDENTIFICATION BY MASS SPECTROMETRY [LARGE SCALE ANALYSIS]</scope>
    <source>
        <tissue>Cervix carcinoma</tissue>
    </source>
</reference>
<reference key="14">
    <citation type="journal article" date="2011" name="BMC Syst. Biol.">
        <title>Initial characterization of the human central proteome.</title>
        <authorList>
            <person name="Burkard T.R."/>
            <person name="Planyavsky M."/>
            <person name="Kaupe I."/>
            <person name="Breitwieser F.P."/>
            <person name="Buerckstuemmer T."/>
            <person name="Bennett K.L."/>
            <person name="Superti-Furga G."/>
            <person name="Colinge J."/>
        </authorList>
    </citation>
    <scope>IDENTIFICATION BY MASS SPECTROMETRY [LARGE SCALE ANALYSIS]</scope>
</reference>
<reference key="15">
    <citation type="journal article" date="2011" name="Sci. Signal.">
        <title>System-wide temporal characterization of the proteome and phosphoproteome of human embryonic stem cell differentiation.</title>
        <authorList>
            <person name="Rigbolt K.T."/>
            <person name="Prokhorova T.A."/>
            <person name="Akimov V."/>
            <person name="Henningsen J."/>
            <person name="Johansen P.T."/>
            <person name="Kratchmarova I."/>
            <person name="Kassem M."/>
            <person name="Mann M."/>
            <person name="Olsen J.V."/>
            <person name="Blagoev B."/>
        </authorList>
    </citation>
    <scope>PHOSPHORYLATION [LARGE SCALE ANALYSIS] AT SER-544</scope>
    <scope>IDENTIFICATION BY MASS SPECTROMETRY [LARGE SCALE ANALYSIS]</scope>
</reference>
<reference key="16">
    <citation type="journal article" date="2012" name="Mol. Cell. Proteomics">
        <title>Comparative large-scale characterisation of plant vs. mammal proteins reveals similar and idiosyncratic N-alpha acetylation features.</title>
        <authorList>
            <person name="Bienvenut W.V."/>
            <person name="Sumpton D."/>
            <person name="Martinez A."/>
            <person name="Lilla S."/>
            <person name="Espagne C."/>
            <person name="Meinnel T."/>
            <person name="Giglione C."/>
        </authorList>
    </citation>
    <scope>ACETYLATION [LARGE SCALE ANALYSIS] AT ALA-2</scope>
    <scope>CLEAVAGE OF INITIATOR METHIONINE [LARGE SCALE ANALYSIS]</scope>
    <scope>IDENTIFICATION BY MASS SPECTROMETRY [LARGE SCALE ANALYSIS]</scope>
</reference>
<reference key="17">
    <citation type="journal article" date="2012" name="Proc. Natl. Acad. Sci. U.S.A.">
        <title>N-terminal acetylome analyses and functional insights of the N-terminal acetyltransferase NatB.</title>
        <authorList>
            <person name="Van Damme P."/>
            <person name="Lasa M."/>
            <person name="Polevoda B."/>
            <person name="Gazquez C."/>
            <person name="Elosegui-Artola A."/>
            <person name="Kim D.S."/>
            <person name="De Juan-Pardo E."/>
            <person name="Demeyer K."/>
            <person name="Hole K."/>
            <person name="Larrea E."/>
            <person name="Timmerman E."/>
            <person name="Prieto J."/>
            <person name="Arnesen T."/>
            <person name="Sherman F."/>
            <person name="Gevaert K."/>
            <person name="Aldabe R."/>
        </authorList>
    </citation>
    <scope>ACETYLATION [LARGE SCALE ANALYSIS] AT ALA-2</scope>
    <scope>CLEAVAGE OF INITIATOR METHIONINE [LARGE SCALE ANALYSIS]</scope>
    <scope>IDENTIFICATION BY MASS SPECTROMETRY [LARGE SCALE ANALYSIS]</scope>
</reference>
<reference key="18">
    <citation type="journal article" date="2013" name="J. Proteome Res.">
        <title>Toward a comprehensive characterization of a human cancer cell phosphoproteome.</title>
        <authorList>
            <person name="Zhou H."/>
            <person name="Di Palma S."/>
            <person name="Preisinger C."/>
            <person name="Peng M."/>
            <person name="Polat A.N."/>
            <person name="Heck A.J."/>
            <person name="Mohammed S."/>
        </authorList>
    </citation>
    <scope>PHOSPHORYLATION [LARGE SCALE ANALYSIS] AT SER-544</scope>
    <scope>IDENTIFICATION BY MASS SPECTROMETRY [LARGE SCALE ANALYSIS]</scope>
    <source>
        <tissue>Cervix carcinoma</tissue>
    </source>
</reference>
<reference key="19">
    <citation type="journal article" date="2014" name="J. Proteomics">
        <title>An enzyme assisted RP-RPLC approach for in-depth analysis of human liver phosphoproteome.</title>
        <authorList>
            <person name="Bian Y."/>
            <person name="Song C."/>
            <person name="Cheng K."/>
            <person name="Dong M."/>
            <person name="Wang F."/>
            <person name="Huang J."/>
            <person name="Sun D."/>
            <person name="Wang L."/>
            <person name="Ye M."/>
            <person name="Zou H."/>
        </authorList>
    </citation>
    <scope>PHOSPHORYLATION [LARGE SCALE ANALYSIS] AT SER-450; SER-466; SER-469 AND SER-544</scope>
    <scope>IDENTIFICATION BY MASS SPECTROMETRY [LARGE SCALE ANALYSIS]</scope>
    <source>
        <tissue>Liver</tissue>
    </source>
</reference>
<reference key="20">
    <citation type="journal article" date="2015" name="Science">
        <title>Stress responses. Mutations in a translation initiation factor identify the target of a memory-enhancing compound.</title>
        <authorList>
            <person name="Sekine Y."/>
            <person name="Zyryanova A."/>
            <person name="Crespillo-Casado A."/>
            <person name="Fischer P.M."/>
            <person name="Harding H.P."/>
            <person name="Ron D."/>
        </authorList>
    </citation>
    <scope>FUNCTION</scope>
    <scope>ACTIVITY REGULATION</scope>
    <scope>IDENTIFICATION BY MASS SPECTROMETRY</scope>
    <scope>IDENTIFICATION IN THE EIF2B COMPLEX</scope>
</reference>
<reference key="21">
    <citation type="journal article" date="2016" name="J. Struct. Funct. Genomics">
        <title>Expression, purification, and crystallization of Schizosaccharomyces pombe eIF2B.</title>
        <authorList>
            <person name="Kashiwagi K."/>
            <person name="Shigeta T."/>
            <person name="Imataka H."/>
            <person name="Ito T."/>
            <person name="Yokoyama S."/>
        </authorList>
    </citation>
    <scope>FUNCTION</scope>
    <scope>IDENTIFICATION IN THE EIF2B COMPLEX</scope>
</reference>
<reference evidence="22 23" key="22">
    <citation type="journal article" date="2019" name="Science">
        <title>Structural basis for eIF2B inhibition in integrated stress response.</title>
        <authorList>
            <person name="Kashiwagi K."/>
            <person name="Yokoyama T."/>
            <person name="Nishimoto M."/>
            <person name="Takahashi M."/>
            <person name="Sakamoto A."/>
            <person name="Yonemochi M."/>
            <person name="Shirouzu M."/>
            <person name="Ito T."/>
        </authorList>
    </citation>
    <scope>STRUCTURE BY ELECTRON MICROSCOPY (4.30 ANGSTROMS) IN COMPLEX WITH THE EIF2 COMPLEX</scope>
    <scope>FUNCTION</scope>
    <scope>SUBUNIT</scope>
    <scope>IDENTIFICATION IN THE EIF2B COMPLEX</scope>
</reference>
<reference key="23">
    <citation type="journal article" date="2001" name="Nat. Genet.">
        <title>Subunits of the translation initiation factor eIF2B are mutant in leukoencephalopathy with vanishing white matter.</title>
        <authorList>
            <person name="Leegwater P.A.J."/>
            <person name="Vermeulen G."/>
            <person name="Koenst A.A.M."/>
            <person name="Naidu S."/>
            <person name="Mulders J."/>
            <person name="Visser A."/>
            <person name="Kersbergen P."/>
            <person name="Mobach D."/>
            <person name="Fonds D."/>
            <person name="van Berkel C.G.M."/>
            <person name="Lemmers R.J.L.F."/>
            <person name="Frants R.R."/>
            <person name="Oudejans C.B.M."/>
            <person name="Schutgens R.B.H."/>
            <person name="Pronk J.C."/>
            <person name="van der Knaap M.S."/>
        </authorList>
    </citation>
    <scope>VARIANTS VWM5 GLY-73; ALA-91; PHE-106; HIS-113; HIS-299; GLY-315; HIS-315; PRO-339; GLN-339; TRP-339; VAL-386; ALA-430; ARG-628 AND LYS-650</scope>
    <scope>VARIANT VAL-587</scope>
</reference>
<reference key="24">
    <citation type="journal article" date="2002" name="Ann. Neurol.">
        <title>Cree leukoencephalopathy and CACH/VWM disease are allelic at the EIF2B5 locus.</title>
        <authorList>
            <person name="Fogli A."/>
            <person name="Wong K."/>
            <person name="Eymard-Pierre E."/>
            <person name="Wenger J."/>
            <person name="Bouffard J.-P."/>
            <person name="Goldin E."/>
            <person name="Black D.N."/>
            <person name="Boespflug-Tanguy O."/>
            <person name="Schiffmann R."/>
        </authorList>
    </citation>
    <scope>VARIANT VWM5 HIS-195</scope>
</reference>
<reference key="25">
    <citation type="journal article" date="2003" name="Am. J. Hum. Genet.">
        <title>Ovarian failure related to eukaryotic initiation factor 2B mutations.</title>
        <authorList>
            <person name="Fogli A."/>
            <person name="Rodriguez D."/>
            <person name="Eymard-Pierre E."/>
            <person name="Bouhour F."/>
            <person name="Labauge P."/>
            <person name="Meaney B.F."/>
            <person name="Zeesman S."/>
            <person name="Kaneski C.R."/>
            <person name="Schiffmann R."/>
            <person name="Boespflug-Tanguy O."/>
        </authorList>
    </citation>
    <scope>VARIANTS VWM5 HIS-113 AND CYS-195</scope>
</reference>
<reference key="26">
    <citation type="journal article" date="2005" name="Hum. Mutat.">
        <title>Identification of ten novel mutations in patients with eIF2B-related disorders.</title>
        <authorList>
            <person name="Ohlenbusch A."/>
            <person name="Henneke M."/>
            <person name="Brockmann K."/>
            <person name="Goerg M."/>
            <person name="Hanefeld F."/>
            <person name="Kohlschutter A."/>
            <person name="Gartner J."/>
        </authorList>
    </citation>
    <scope>VARIANTS VWM5 SER-68; THR-74; HIS-113; GLY-269; PHE-310 AND ARG-335</scope>
</reference>
<reference key="27">
    <citation type="journal article" date="2009" name="J. Hum. Genet.">
        <title>Identification of novel EIF2B mutations in Chinese patients with vanishing white matter disease.</title>
        <authorList>
            <person name="Wu Y."/>
            <person name="Pan Y."/>
            <person name="Du L."/>
            <person name="Wang J."/>
            <person name="Gu Q."/>
            <person name="Gao Z."/>
            <person name="Li J."/>
            <person name="Leng X."/>
            <person name="Qin J."/>
            <person name="Wu X."/>
            <person name="Jiang Y."/>
        </authorList>
    </citation>
    <scope>VARIANTS VWM5 VAL-62; CYS-113; GLN-269; CYS-315; SER-335; PRO-339; ASP-376; VAL-386 AND LEU-447</scope>
</reference>
<reference key="28">
    <citation type="journal article" date="2011" name="Neurogenetics">
        <title>Adult-onset leukoencephalopathies with vanishing white matter with novel missense mutations in EIF2B2, EIF2B3, and EIF2B5.</title>
        <authorList>
            <person name="Matsukawa T."/>
            <person name="Wang X."/>
            <person name="Liu R."/>
            <person name="Wortham N.C."/>
            <person name="Onuki Y."/>
            <person name="Kubota A."/>
            <person name="Hida A."/>
            <person name="Kowa H."/>
            <person name="Fukuda Y."/>
            <person name="Ishiura H."/>
            <person name="Mitsui J."/>
            <person name="Takahashi Y."/>
            <person name="Aoki S."/>
            <person name="Takizawa S."/>
            <person name="Shimizu J."/>
            <person name="Goto J."/>
            <person name="Proud C.G."/>
            <person name="Tsuji S."/>
        </authorList>
    </citation>
    <scope>VARIANT VWM5 HIS-270</scope>
</reference>
<protein>
    <recommendedName>
        <fullName>Translation initiation factor eIF2B subunit epsilon</fullName>
    </recommendedName>
    <alternativeName>
        <fullName>eIF2B GDP-GTP exchange factor subunit epsilon</fullName>
    </alternativeName>
</protein>
<organism>
    <name type="scientific">Homo sapiens</name>
    <name type="common">Human</name>
    <dbReference type="NCBI Taxonomy" id="9606"/>
    <lineage>
        <taxon>Eukaryota</taxon>
        <taxon>Metazoa</taxon>
        <taxon>Chordata</taxon>
        <taxon>Craniata</taxon>
        <taxon>Vertebrata</taxon>
        <taxon>Euteleostomi</taxon>
        <taxon>Mammalia</taxon>
        <taxon>Eutheria</taxon>
        <taxon>Euarchontoglires</taxon>
        <taxon>Primates</taxon>
        <taxon>Haplorrhini</taxon>
        <taxon>Catarrhini</taxon>
        <taxon>Hominidae</taxon>
        <taxon>Homo</taxon>
    </lineage>
</organism>
<accession>Q13144</accession>
<accession>Q541Z1</accession>
<accession>Q96D04</accession>